<protein>
    <recommendedName>
        <fullName>Protamine-2</fullName>
    </recommendedName>
    <alternativeName>
        <fullName>Sperm histone P2</fullName>
    </alternativeName>
    <alternativeName>
        <fullName>Sperm protamine P2</fullName>
    </alternativeName>
</protein>
<evidence type="ECO:0000250" key="1">
    <source>
        <dbReference type="UniProtKB" id="P07978"/>
    </source>
</evidence>
<evidence type="ECO:0000250" key="2">
    <source>
        <dbReference type="UniProtKB" id="P11248"/>
    </source>
</evidence>
<evidence type="ECO:0000256" key="3">
    <source>
        <dbReference type="SAM" id="MobiDB-lite"/>
    </source>
</evidence>
<evidence type="ECO:0000305" key="4"/>
<organism>
    <name type="scientific">Macaca nemestrina</name>
    <name type="common">Pig-tailed macaque</name>
    <dbReference type="NCBI Taxonomy" id="9545"/>
    <lineage>
        <taxon>Eukaryota</taxon>
        <taxon>Metazoa</taxon>
        <taxon>Chordata</taxon>
        <taxon>Craniata</taxon>
        <taxon>Vertebrata</taxon>
        <taxon>Euteleostomi</taxon>
        <taxon>Mammalia</taxon>
        <taxon>Eutheria</taxon>
        <taxon>Euarchontoglires</taxon>
        <taxon>Primates</taxon>
        <taxon>Haplorrhini</taxon>
        <taxon>Catarrhini</taxon>
        <taxon>Cercopithecidae</taxon>
        <taxon>Cercopithecinae</taxon>
        <taxon>Macaca</taxon>
    </lineage>
</organism>
<sequence length="103" mass="13241">MVRYRMRSLSERPHEVHGQQVHGQDQGHNGQEEQGLNPEHVEVYERTHRGHSHHRRRRCSRRRLHRIHRRRHRSCRRRRRRSCRHRRRHRRGCRTRRRRCRRH</sequence>
<dbReference type="EMBL" id="X71340">
    <property type="protein sequence ID" value="CAA50480.1"/>
    <property type="molecule type" value="Genomic_DNA"/>
</dbReference>
<dbReference type="PIR" id="S33337">
    <property type="entry name" value="S33337"/>
</dbReference>
<dbReference type="RefSeq" id="XP_011715771.1">
    <property type="nucleotide sequence ID" value="XM_011717469.1"/>
</dbReference>
<dbReference type="STRING" id="9545.ENSMNEP00000009009"/>
<dbReference type="Ensembl" id="ENSMNET00000033177.1">
    <property type="protein sequence ID" value="ENSMNEP00000009007.1"/>
    <property type="gene ID" value="ENSMNEG00000028974.1"/>
</dbReference>
<dbReference type="GeneTree" id="ENSGT00940000163619"/>
<dbReference type="OMA" id="PCAPIPG"/>
<dbReference type="Proteomes" id="UP000233120">
    <property type="component" value="Unassembled WGS sequence"/>
</dbReference>
<dbReference type="Bgee" id="ENSMNEG00000028974">
    <property type="expression patterns" value="Expressed in multicellular organism"/>
</dbReference>
<dbReference type="GO" id="GO:0000786">
    <property type="term" value="C:nucleosome"/>
    <property type="evidence" value="ECO:0007669"/>
    <property type="project" value="UniProtKB-KW"/>
</dbReference>
<dbReference type="GO" id="GO:0005634">
    <property type="term" value="C:nucleus"/>
    <property type="evidence" value="ECO:0007669"/>
    <property type="project" value="UniProtKB-SubCell"/>
</dbReference>
<dbReference type="GO" id="GO:0003677">
    <property type="term" value="F:DNA binding"/>
    <property type="evidence" value="ECO:0007669"/>
    <property type="project" value="UniProtKB-KW"/>
</dbReference>
<dbReference type="GO" id="GO:0030261">
    <property type="term" value="P:chromosome condensation"/>
    <property type="evidence" value="ECO:0007669"/>
    <property type="project" value="UniProtKB-KW"/>
</dbReference>
<dbReference type="GO" id="GO:0006997">
    <property type="term" value="P:nucleus organization"/>
    <property type="evidence" value="ECO:0007669"/>
    <property type="project" value="TreeGrafter"/>
</dbReference>
<dbReference type="GO" id="GO:0007286">
    <property type="term" value="P:spermatid development"/>
    <property type="evidence" value="ECO:0007669"/>
    <property type="project" value="InterPro"/>
</dbReference>
<dbReference type="GO" id="GO:0007283">
    <property type="term" value="P:spermatogenesis"/>
    <property type="evidence" value="ECO:0000250"/>
    <property type="project" value="UniProtKB"/>
</dbReference>
<dbReference type="InterPro" id="IPR000492">
    <property type="entry name" value="PRM2"/>
</dbReference>
<dbReference type="PANTHER" id="PTHR21341">
    <property type="entry name" value="PROTAMINE-2"/>
    <property type="match status" value="1"/>
</dbReference>
<dbReference type="PANTHER" id="PTHR21341:SF2">
    <property type="entry name" value="PROTAMINE-2"/>
    <property type="match status" value="1"/>
</dbReference>
<dbReference type="Pfam" id="PF00841">
    <property type="entry name" value="Protamine_P2"/>
    <property type="match status" value="1"/>
</dbReference>
<name>PRM2_MACNE</name>
<keyword id="KW-0158">Chromosome</keyword>
<keyword id="KW-0217">Developmental protein</keyword>
<keyword id="KW-0221">Differentiation</keyword>
<keyword id="KW-0226">DNA condensation</keyword>
<keyword id="KW-0238">DNA-binding</keyword>
<keyword id="KW-0544">Nucleosome core</keyword>
<keyword id="KW-0539">Nucleus</keyword>
<keyword id="KW-0597">Phosphoprotein</keyword>
<keyword id="KW-1185">Reference proteome</keyword>
<keyword id="KW-0744">Spermatogenesis</keyword>
<comment type="function">
    <text evidence="1">Protamines substitute for histones in the chromatin of sperm during the haploid phase of spermatogenesis. They compact sperm DNA into a highly condensed, stable and inactive complex.</text>
</comment>
<comment type="subunit">
    <text evidence="1">Interacts with TDRP.</text>
</comment>
<comment type="subcellular location">
    <subcellularLocation>
        <location evidence="1">Nucleus</location>
    </subcellularLocation>
    <subcellularLocation>
        <location evidence="1">Chromosome</location>
    </subcellularLocation>
</comment>
<comment type="tissue specificity">
    <text>Testis.</text>
</comment>
<comment type="PTM">
    <text evidence="1">Proteolytic processing into mature chains is required for histone eviction during spermatogenesis. Transition proteins (TNP1 and TNP2) are required for processing.</text>
</comment>
<comment type="similarity">
    <text evidence="4">Belongs to the protamine P2 family.</text>
</comment>
<accession>P35298</accession>
<reference key="1">
    <citation type="journal article" date="1993" name="Eur. J. Biochem.">
        <title>Evolution of pro-protamine P2 genes in primates.</title>
        <authorList>
            <person name="Retief J.D."/>
            <person name="Dixon G.H."/>
        </authorList>
    </citation>
    <scope>NUCLEOTIDE SEQUENCE [GENOMIC DNA]</scope>
</reference>
<reference key="2">
    <citation type="journal article" date="1993" name="Eur. J. Biochem.">
        <authorList>
            <person name="Retief J.D."/>
            <person name="Dixon G.H."/>
        </authorList>
    </citation>
    <scope>ERRATUM OF PUBMED:8513810</scope>
</reference>
<proteinExistence type="evidence at transcript level"/>
<feature type="chain" id="PRO_0000191603" description="Protamine-2">
    <location>
        <begin position="1"/>
        <end position="103"/>
    </location>
</feature>
<feature type="region of interest" description="Disordered" evidence="3">
    <location>
        <begin position="1"/>
        <end position="103"/>
    </location>
</feature>
<feature type="compositionally biased region" description="Basic and acidic residues" evidence="3">
    <location>
        <begin position="8"/>
        <end position="17"/>
    </location>
</feature>
<feature type="compositionally biased region" description="Low complexity" evidence="3">
    <location>
        <begin position="18"/>
        <end position="29"/>
    </location>
</feature>
<feature type="compositionally biased region" description="Basic residues" evidence="3">
    <location>
        <begin position="48"/>
        <end position="103"/>
    </location>
</feature>
<feature type="modified residue" description="Phosphoserine" evidence="2">
    <location>
        <position position="8"/>
    </location>
</feature>
<feature type="modified residue" description="Phosphoserine" evidence="2">
    <location>
        <position position="10"/>
    </location>
</feature>
<gene>
    <name type="primary">PRM2</name>
</gene>